<organism>
    <name type="scientific">Arabidopsis thaliana</name>
    <name type="common">Mouse-ear cress</name>
    <dbReference type="NCBI Taxonomy" id="3702"/>
    <lineage>
        <taxon>Eukaryota</taxon>
        <taxon>Viridiplantae</taxon>
        <taxon>Streptophyta</taxon>
        <taxon>Embryophyta</taxon>
        <taxon>Tracheophyta</taxon>
        <taxon>Spermatophyta</taxon>
        <taxon>Magnoliopsida</taxon>
        <taxon>eudicotyledons</taxon>
        <taxon>Gunneridae</taxon>
        <taxon>Pentapetalae</taxon>
        <taxon>rosids</taxon>
        <taxon>malvids</taxon>
        <taxon>Brassicales</taxon>
        <taxon>Brassicaceae</taxon>
        <taxon>Camelineae</taxon>
        <taxon>Arabidopsis</taxon>
    </lineage>
</organism>
<proteinExistence type="evidence at transcript level"/>
<sequence length="700" mass="79195">MAVTGVSSAFGRLFKQDKTHKRVIGTGTKLTVTRQILEHLEGGNVSKAVSVLFASPEPVSYWLYERLFRSCSSKALVVQARKVQSHLVTFSPLPPIFLLNRAIEAYGKCGCVDDARELFEEMPERDGGSWNAVITACAQNGVSDEVFRMFRRMNRDGVRATETSFAGVLKSCGLILDLRLLRQLHCAVVKYGYSGNVDLETSIVDVYGKCRVMSDARRVFDEIVNPSDVSWNVIVRRYLEMGFNDEAVVMFFKMLELNVRPLNHTVSSVMLACSRSLALEVGKVIHAIAVKLSVVADTVVSTSVFDMYVKCDRLESARRVFDQTRSKDLKSWTSAMSGYAMSGLTREARELFDLMPERNIVSWNAMLGGYVHAHEWDEALDFLTLMRQEIENIDNVTLVWILNVCSGISDVQMGKQAHGFIYRHGYDTNVIVANALLDMYGKCGTLQSANIWFRQMSELRDEVSWNALLTGVARVGRSEQALSFFEGMQVEAKPSKYTLATLLAGCANIPALNLGKAIHGFLIRDGYKIDVVIRGAMVDMYSKCRCFDYAIEVFKEAATRDLILWNSIIRGCCRNGRSKEVFELFMLLENEGVKPDHVTFLGILQACIREGHVELGFQYFSSMSTKYHISPQVEHYDCMIELYCKYGCLHQLEEFLLLMPFDPPMQMLTRINDACQRYRWSKLGAWAAKRLMNDHYLQPP</sequence>
<keyword id="KW-1185">Reference proteome</keyword>
<keyword id="KW-0677">Repeat</keyword>
<comment type="similarity">
    <text evidence="1">Belongs to the PPR family. PCMP-A subfamily.</text>
</comment>
<comment type="online information" name="Pentatricopeptide repeat proteins">
    <link uri="https://ppr.plantenergy.uwa.edu.au"/>
</comment>
<dbReference type="EMBL" id="AB028611">
    <property type="protein sequence ID" value="BAB01836.1"/>
    <property type="molecule type" value="Genomic_DNA"/>
</dbReference>
<dbReference type="EMBL" id="CP002686">
    <property type="protein sequence ID" value="AEE77176.1"/>
    <property type="molecule type" value="Genomic_DNA"/>
</dbReference>
<dbReference type="RefSeq" id="NP_189286.1">
    <property type="nucleotide sequence ID" value="NM_113562.2"/>
</dbReference>
<dbReference type="SMR" id="Q9LRV2"/>
<dbReference type="FunCoup" id="Q9LRV2">
    <property type="interactions" value="923"/>
</dbReference>
<dbReference type="STRING" id="3702.Q9LRV2"/>
<dbReference type="iPTMnet" id="Q9LRV2"/>
<dbReference type="PaxDb" id="3702-AT3G26540.1"/>
<dbReference type="EnsemblPlants" id="AT3G26540.1">
    <property type="protein sequence ID" value="AT3G26540.1"/>
    <property type="gene ID" value="AT3G26540"/>
</dbReference>
<dbReference type="GeneID" id="822262"/>
<dbReference type="Gramene" id="AT3G26540.1">
    <property type="protein sequence ID" value="AT3G26540.1"/>
    <property type="gene ID" value="AT3G26540"/>
</dbReference>
<dbReference type="KEGG" id="ath:AT3G26540"/>
<dbReference type="Araport" id="AT3G26540"/>
<dbReference type="TAIR" id="AT3G26540"/>
<dbReference type="eggNOG" id="KOG4197">
    <property type="taxonomic scope" value="Eukaryota"/>
</dbReference>
<dbReference type="HOGENOM" id="CLU_002706_15_10_1"/>
<dbReference type="InParanoid" id="Q9LRV2"/>
<dbReference type="OMA" id="CIIPRLE"/>
<dbReference type="PhylomeDB" id="Q9LRV2"/>
<dbReference type="PRO" id="PR:Q9LRV2"/>
<dbReference type="Proteomes" id="UP000006548">
    <property type="component" value="Chromosome 3"/>
</dbReference>
<dbReference type="ExpressionAtlas" id="Q9LRV2">
    <property type="expression patterns" value="baseline and differential"/>
</dbReference>
<dbReference type="GO" id="GO:0003723">
    <property type="term" value="F:RNA binding"/>
    <property type="evidence" value="ECO:0007669"/>
    <property type="project" value="InterPro"/>
</dbReference>
<dbReference type="GO" id="GO:0009451">
    <property type="term" value="P:RNA modification"/>
    <property type="evidence" value="ECO:0007669"/>
    <property type="project" value="InterPro"/>
</dbReference>
<dbReference type="GO" id="GO:0010449">
    <property type="term" value="P:root meristem growth"/>
    <property type="evidence" value="ECO:0000316"/>
    <property type="project" value="TAIR"/>
</dbReference>
<dbReference type="FunFam" id="1.25.40.10:FF:001089">
    <property type="entry name" value="Pentatricopeptide repeat-containing protein"/>
    <property type="match status" value="1"/>
</dbReference>
<dbReference type="FunFam" id="1.25.40.10:FF:001371">
    <property type="entry name" value="Pentatricopeptide repeat-containing protein"/>
    <property type="match status" value="1"/>
</dbReference>
<dbReference type="FunFam" id="1.25.40.10:FF:000158">
    <property type="entry name" value="pentatricopeptide repeat-containing protein At2g33680"/>
    <property type="match status" value="1"/>
</dbReference>
<dbReference type="FunFam" id="1.25.40.10:FF:000425">
    <property type="entry name" value="Pentatricopeptide repeat-containing protein At3g26540"/>
    <property type="match status" value="1"/>
</dbReference>
<dbReference type="FunFam" id="1.25.40.10:FF:001775">
    <property type="entry name" value="Pentatricopeptide repeat-containing protein At3g26540"/>
    <property type="match status" value="1"/>
</dbReference>
<dbReference type="Gene3D" id="1.25.40.10">
    <property type="entry name" value="Tetratricopeptide repeat domain"/>
    <property type="match status" value="6"/>
</dbReference>
<dbReference type="InterPro" id="IPR002885">
    <property type="entry name" value="Pentatricopeptide_rpt"/>
</dbReference>
<dbReference type="InterPro" id="IPR046960">
    <property type="entry name" value="PPR_At4g14850-like_plant"/>
</dbReference>
<dbReference type="InterPro" id="IPR011990">
    <property type="entry name" value="TPR-like_helical_dom_sf"/>
</dbReference>
<dbReference type="NCBIfam" id="TIGR00756">
    <property type="entry name" value="PPR"/>
    <property type="match status" value="5"/>
</dbReference>
<dbReference type="PANTHER" id="PTHR47926">
    <property type="entry name" value="PENTATRICOPEPTIDE REPEAT-CONTAINING PROTEIN"/>
    <property type="match status" value="1"/>
</dbReference>
<dbReference type="Pfam" id="PF01535">
    <property type="entry name" value="PPR"/>
    <property type="match status" value="9"/>
</dbReference>
<dbReference type="Pfam" id="PF13041">
    <property type="entry name" value="PPR_2"/>
    <property type="match status" value="1"/>
</dbReference>
<dbReference type="PROSITE" id="PS51375">
    <property type="entry name" value="PPR"/>
    <property type="match status" value="13"/>
</dbReference>
<protein>
    <recommendedName>
        <fullName>Pentatricopeptide repeat-containing protein At3g26540</fullName>
    </recommendedName>
</protein>
<gene>
    <name type="primary">PCMP-A5</name>
    <name type="ordered locus">At3g26540</name>
    <name type="ORF">MFE16.1</name>
</gene>
<reference key="1">
    <citation type="journal article" date="2000" name="DNA Res.">
        <title>Structural analysis of Arabidopsis thaliana chromosome 3. I. Sequence features of the regions of 4,504,864 bp covered by sixty P1 and TAC clones.</title>
        <authorList>
            <person name="Sato S."/>
            <person name="Nakamura Y."/>
            <person name="Kaneko T."/>
            <person name="Katoh T."/>
            <person name="Asamizu E."/>
            <person name="Tabata S."/>
        </authorList>
    </citation>
    <scope>NUCLEOTIDE SEQUENCE [LARGE SCALE GENOMIC DNA]</scope>
    <source>
        <strain>cv. Columbia</strain>
    </source>
</reference>
<reference key="2">
    <citation type="journal article" date="2017" name="Plant J.">
        <title>Araport11: a complete reannotation of the Arabidopsis thaliana reference genome.</title>
        <authorList>
            <person name="Cheng C.Y."/>
            <person name="Krishnakumar V."/>
            <person name="Chan A.P."/>
            <person name="Thibaud-Nissen F."/>
            <person name="Schobel S."/>
            <person name="Town C.D."/>
        </authorList>
    </citation>
    <scope>GENOME REANNOTATION</scope>
    <source>
        <strain>cv. Columbia</strain>
    </source>
</reference>
<reference key="3">
    <citation type="journal article" date="2004" name="Plant Cell">
        <title>Genome-wide analysis of Arabidopsis pentatricopeptide repeat proteins reveals their essential role in organelle biogenesis.</title>
        <authorList>
            <person name="Lurin C."/>
            <person name="Andres C."/>
            <person name="Aubourg S."/>
            <person name="Bellaoui M."/>
            <person name="Bitton F."/>
            <person name="Bruyere C."/>
            <person name="Caboche M."/>
            <person name="Debast C."/>
            <person name="Gualberto J."/>
            <person name="Hoffmann B."/>
            <person name="Lecharny A."/>
            <person name="Le Ret M."/>
            <person name="Martin-Magniette M.-L."/>
            <person name="Mireau H."/>
            <person name="Peeters N."/>
            <person name="Renou J.-P."/>
            <person name="Szurek B."/>
            <person name="Taconnat L."/>
            <person name="Small I."/>
        </authorList>
    </citation>
    <scope>GENE FAMILY</scope>
</reference>
<accession>Q9LRV2</accession>
<evidence type="ECO:0000305" key="1"/>
<name>PP256_ARATH</name>
<feature type="chain" id="PRO_0000356115" description="Pentatricopeptide repeat-containing protein At3g26540">
    <location>
        <begin position="1"/>
        <end position="700"/>
    </location>
</feature>
<feature type="repeat" description="PPR 1">
    <location>
        <begin position="95"/>
        <end position="125"/>
    </location>
</feature>
<feature type="repeat" description="PPR 2">
    <location>
        <begin position="126"/>
        <end position="160"/>
    </location>
</feature>
<feature type="repeat" description="PPR 3">
    <location>
        <begin position="161"/>
        <end position="195"/>
    </location>
</feature>
<feature type="repeat" description="PPR 4">
    <location>
        <begin position="196"/>
        <end position="226"/>
    </location>
</feature>
<feature type="repeat" description="PPR 5">
    <location>
        <begin position="227"/>
        <end position="261"/>
    </location>
</feature>
<feature type="repeat" description="PPR 6">
    <location>
        <begin position="262"/>
        <end position="296"/>
    </location>
</feature>
<feature type="repeat" description="PPR 7">
    <location>
        <begin position="297"/>
        <end position="327"/>
    </location>
</feature>
<feature type="repeat" description="PPR 8">
    <location>
        <begin position="328"/>
        <end position="362"/>
    </location>
</feature>
<feature type="repeat" description="PPR 9">
    <location>
        <begin position="363"/>
        <end position="389"/>
    </location>
</feature>
<feature type="repeat" description="PPR 10">
    <location>
        <begin position="394"/>
        <end position="428"/>
    </location>
</feature>
<feature type="repeat" description="PPR 11">
    <location>
        <begin position="429"/>
        <end position="459"/>
    </location>
</feature>
<feature type="repeat" description="PPR 12">
    <location>
        <begin position="461"/>
        <end position="495"/>
    </location>
</feature>
<feature type="repeat" description="PPR 13">
    <location>
        <begin position="497"/>
        <end position="529"/>
    </location>
</feature>
<feature type="repeat" description="PPR 14">
    <location>
        <begin position="530"/>
        <end position="560"/>
    </location>
</feature>
<feature type="repeat" description="PPR 15">
    <location>
        <begin position="561"/>
        <end position="595"/>
    </location>
</feature>
<feature type="repeat" description="PPR 16">
    <location>
        <begin position="596"/>
        <end position="626"/>
    </location>
</feature>
<feature type="repeat" description="PPR 17">
    <location>
        <begin position="632"/>
        <end position="662"/>
    </location>
</feature>